<feature type="chain" id="PRO_0000204263" description="Hemocyanin subunit A">
    <location>
        <begin position="1"/>
        <end position="11" status="greater than"/>
    </location>
</feature>
<feature type="non-terminal residue" evidence="4">
    <location>
        <position position="11"/>
    </location>
</feature>
<protein>
    <recommendedName>
        <fullName>Hemocyanin subunit A</fullName>
    </recommendedName>
    <alternativeName>
        <fullName>CCH-A</fullName>
    </alternativeName>
</protein>
<reference evidence="5" key="1">
    <citation type="journal article" date="2004" name="J. Biol. Chem.">
        <title>Hemocyanin of the molluscan Concholepas concholepas exhibits an unusual heterodecameric array of subunits.</title>
        <authorList>
            <person name="De Ioannes P."/>
            <person name="Moltedo B."/>
            <person name="Oliva H."/>
            <person name="Pacheco R."/>
            <person name="Faunes F."/>
            <person name="De Ioannes A.E."/>
            <person name="Becker M.I."/>
        </authorList>
    </citation>
    <scope>PROTEIN SEQUENCE</scope>
    <scope>COFACTOR</scope>
    <scope>SUBUNIT</scope>
    <scope>SUBCELLULAR LOCATION</scope>
    <scope>TISSUE SPECIFICITY</scope>
    <source>
        <tissue evidence="3">Hemolymph</tissue>
    </source>
</reference>
<name>HCYA_CONCC</name>
<evidence type="ECO:0000250" key="1"/>
<evidence type="ECO:0000255" key="2"/>
<evidence type="ECO:0000269" key="3">
    <source>
    </source>
</evidence>
<evidence type="ECO:0000303" key="4">
    <source>
    </source>
</evidence>
<evidence type="ECO:0000305" key="5"/>
<accession>P84619</accession>
<keyword id="KW-0186">Copper</keyword>
<keyword id="KW-0903">Direct protein sequencing</keyword>
<keyword id="KW-0479">Metal-binding</keyword>
<keyword id="KW-0561">Oxygen transport</keyword>
<keyword id="KW-0964">Secreted</keyword>
<keyword id="KW-0883">Thioether bond</keyword>
<keyword id="KW-0813">Transport</keyword>
<comment type="function">
    <text evidence="5">Hemocyanins are copper-containing oxygen carriers occurring freely dissolved in the hemolymph of many mollusks and arthropods.</text>
</comment>
<comment type="cofactor">
    <cofactor evidence="3">
        <name>Cu(2+)</name>
        <dbReference type="ChEBI" id="CHEBI:29036"/>
    </cofactor>
    <text evidence="3">Binds 2 copper ions per heterodimer.</text>
</comment>
<comment type="subunit">
    <text evidence="3">Heterodidecamer composed of A and B subunits, each containing 8 globular oxygen-binding functional units. Heterogenous decameric or multidecameric structures may also be formed.</text>
</comment>
<comment type="subcellular location">
    <subcellularLocation>
        <location evidence="3">Secreted</location>
        <location evidence="3">Extracellular space</location>
    </subcellularLocation>
</comment>
<comment type="tissue specificity">
    <text evidence="3">Hemolymph.</text>
</comment>
<comment type="PTM">
    <text evidence="1">Forms a thioether bond between 2 amino acids.</text>
</comment>
<comment type="similarity">
    <text evidence="2">Belongs to the tyrosinase family. Hemocyanin subfamily.</text>
</comment>
<organism>
    <name type="scientific">Concholepas concholepas</name>
    <name type="common">Barnacle rock-shell</name>
    <name type="synonym">Buccinum concholepas</name>
    <dbReference type="NCBI Taxonomy" id="137544"/>
    <lineage>
        <taxon>Eukaryota</taxon>
        <taxon>Metazoa</taxon>
        <taxon>Spiralia</taxon>
        <taxon>Lophotrochozoa</taxon>
        <taxon>Mollusca</taxon>
        <taxon>Gastropoda</taxon>
        <taxon>Caenogastropoda</taxon>
        <taxon>Neogastropoda</taxon>
        <taxon>Muricoidea</taxon>
        <taxon>Muricidae</taxon>
        <taxon>Concholepas</taxon>
    </lineage>
</organism>
<proteinExistence type="evidence at protein level"/>
<sequence length="11" mass="1306">LMRKDVDTLTD</sequence>
<dbReference type="SABIO-RK" id="P84619"/>
<dbReference type="GO" id="GO:0005576">
    <property type="term" value="C:extracellular region"/>
    <property type="evidence" value="ECO:0007669"/>
    <property type="project" value="UniProtKB-SubCell"/>
</dbReference>
<dbReference type="GO" id="GO:0046872">
    <property type="term" value="F:metal ion binding"/>
    <property type="evidence" value="ECO:0007669"/>
    <property type="project" value="UniProtKB-KW"/>
</dbReference>
<dbReference type="GO" id="GO:0005344">
    <property type="term" value="F:oxygen carrier activity"/>
    <property type="evidence" value="ECO:0007669"/>
    <property type="project" value="UniProtKB-KW"/>
</dbReference>